<organism>
    <name type="scientific">Caulobacter vibrioides (strain ATCC 19089 / CIP 103742 / CB 15)</name>
    <name type="common">Caulobacter crescentus</name>
    <dbReference type="NCBI Taxonomy" id="190650"/>
    <lineage>
        <taxon>Bacteria</taxon>
        <taxon>Pseudomonadati</taxon>
        <taxon>Pseudomonadota</taxon>
        <taxon>Alphaproteobacteria</taxon>
        <taxon>Caulobacterales</taxon>
        <taxon>Caulobacteraceae</taxon>
        <taxon>Caulobacter</taxon>
    </lineage>
</organism>
<sequence length="151" mass="16862">MTDLNVTQLGRVVDAPESPEAAVLERVPNPQSDVLYLARFVAPEFTSLCPVTGQPDFAHLVIDYAPGDWLIESKSLKLYLTSFRNHGSFHEDCTVKVARKIVEIAQPRWLRIGGYWYPRGGIPIDVFWQTGPAPEGLWVPDQGVAPYRGRG</sequence>
<feature type="chain" id="PRO_0000162969" description="NADPH-dependent 7-cyano-7-deazaguanine reductase">
    <location>
        <begin position="1"/>
        <end position="151"/>
    </location>
</feature>
<feature type="active site" description="Thioimide intermediate" evidence="1">
    <location>
        <position position="49"/>
    </location>
</feature>
<feature type="active site" description="Proton donor" evidence="1">
    <location>
        <position position="56"/>
    </location>
</feature>
<feature type="binding site" evidence="1">
    <location>
        <begin position="71"/>
        <end position="73"/>
    </location>
    <ligand>
        <name>substrate</name>
    </ligand>
</feature>
<feature type="binding site" evidence="1">
    <location>
        <begin position="90"/>
        <end position="91"/>
    </location>
    <ligand>
        <name>substrate</name>
    </ligand>
</feature>
<keyword id="KW-0963">Cytoplasm</keyword>
<keyword id="KW-0521">NADP</keyword>
<keyword id="KW-0560">Oxidoreductase</keyword>
<keyword id="KW-0671">Queuosine biosynthesis</keyword>
<keyword id="KW-1185">Reference proteome</keyword>
<reference key="1">
    <citation type="journal article" date="2001" name="Proc. Natl. Acad. Sci. U.S.A.">
        <title>Complete genome sequence of Caulobacter crescentus.</title>
        <authorList>
            <person name="Nierman W.C."/>
            <person name="Feldblyum T.V."/>
            <person name="Laub M.T."/>
            <person name="Paulsen I.T."/>
            <person name="Nelson K.E."/>
            <person name="Eisen J.A."/>
            <person name="Heidelberg J.F."/>
            <person name="Alley M.R.K."/>
            <person name="Ohta N."/>
            <person name="Maddock J.R."/>
            <person name="Potocka I."/>
            <person name="Nelson W.C."/>
            <person name="Newton A."/>
            <person name="Stephens C."/>
            <person name="Phadke N.D."/>
            <person name="Ely B."/>
            <person name="DeBoy R.T."/>
            <person name="Dodson R.J."/>
            <person name="Durkin A.S."/>
            <person name="Gwinn M.L."/>
            <person name="Haft D.H."/>
            <person name="Kolonay J.F."/>
            <person name="Smit J."/>
            <person name="Craven M.B."/>
            <person name="Khouri H.M."/>
            <person name="Shetty J."/>
            <person name="Berry K.J."/>
            <person name="Utterback T.R."/>
            <person name="Tran K."/>
            <person name="Wolf A.M."/>
            <person name="Vamathevan J.J."/>
            <person name="Ermolaeva M.D."/>
            <person name="White O."/>
            <person name="Salzberg S.L."/>
            <person name="Venter J.C."/>
            <person name="Shapiro L."/>
            <person name="Fraser C.M."/>
        </authorList>
    </citation>
    <scope>NUCLEOTIDE SEQUENCE [LARGE SCALE GENOMIC DNA]</scope>
    <source>
        <strain>ATCC 19089 / CIP 103742 / CB 15</strain>
    </source>
</reference>
<gene>
    <name evidence="1" type="primary">queF</name>
    <name type="ordered locus">CC_2654</name>
</gene>
<name>QUEF_CAUVC</name>
<dbReference type="EC" id="1.7.1.13" evidence="1"/>
<dbReference type="EMBL" id="AE005673">
    <property type="protein sequence ID" value="AAK24621.1"/>
    <property type="molecule type" value="Genomic_DNA"/>
</dbReference>
<dbReference type="PIR" id="A87578">
    <property type="entry name" value="A87578"/>
</dbReference>
<dbReference type="RefSeq" id="NP_421453.1">
    <property type="nucleotide sequence ID" value="NC_002696.2"/>
</dbReference>
<dbReference type="RefSeq" id="WP_010920506.1">
    <property type="nucleotide sequence ID" value="NC_002696.2"/>
</dbReference>
<dbReference type="SMR" id="Q9A515"/>
<dbReference type="STRING" id="190650.CC_2654"/>
<dbReference type="EnsemblBacteria" id="AAK24621">
    <property type="protein sequence ID" value="AAK24621"/>
    <property type="gene ID" value="CC_2654"/>
</dbReference>
<dbReference type="KEGG" id="ccr:CC_2654"/>
<dbReference type="PATRIC" id="fig|190650.5.peg.2666"/>
<dbReference type="eggNOG" id="COG0780">
    <property type="taxonomic scope" value="Bacteria"/>
</dbReference>
<dbReference type="HOGENOM" id="CLU_102489_0_1_5"/>
<dbReference type="BioCyc" id="CAULO:CC2654-MONOMER"/>
<dbReference type="UniPathway" id="UPA00392"/>
<dbReference type="Proteomes" id="UP000001816">
    <property type="component" value="Chromosome"/>
</dbReference>
<dbReference type="GO" id="GO:0005737">
    <property type="term" value="C:cytoplasm"/>
    <property type="evidence" value="ECO:0007669"/>
    <property type="project" value="UniProtKB-SubCell"/>
</dbReference>
<dbReference type="GO" id="GO:0033739">
    <property type="term" value="F:preQ1 synthase activity"/>
    <property type="evidence" value="ECO:0007669"/>
    <property type="project" value="UniProtKB-UniRule"/>
</dbReference>
<dbReference type="GO" id="GO:0008616">
    <property type="term" value="P:queuosine biosynthetic process"/>
    <property type="evidence" value="ECO:0007669"/>
    <property type="project" value="UniProtKB-UniRule"/>
</dbReference>
<dbReference type="GO" id="GO:0006400">
    <property type="term" value="P:tRNA modification"/>
    <property type="evidence" value="ECO:0007669"/>
    <property type="project" value="UniProtKB-UniRule"/>
</dbReference>
<dbReference type="Gene3D" id="3.30.1130.10">
    <property type="match status" value="1"/>
</dbReference>
<dbReference type="HAMAP" id="MF_00818">
    <property type="entry name" value="QueF_type1"/>
    <property type="match status" value="1"/>
</dbReference>
<dbReference type="InterPro" id="IPR043133">
    <property type="entry name" value="GTP-CH-I_C/QueF"/>
</dbReference>
<dbReference type="InterPro" id="IPR050084">
    <property type="entry name" value="NADPH_dep_7-cyano-7-deazaG_red"/>
</dbReference>
<dbReference type="InterPro" id="IPR029500">
    <property type="entry name" value="QueF"/>
</dbReference>
<dbReference type="InterPro" id="IPR016856">
    <property type="entry name" value="QueF_type1"/>
</dbReference>
<dbReference type="NCBIfam" id="TIGR03139">
    <property type="entry name" value="QueF-II"/>
    <property type="match status" value="1"/>
</dbReference>
<dbReference type="PANTHER" id="PTHR34354">
    <property type="entry name" value="NADPH-DEPENDENT 7-CYANO-7-DEAZAGUANINE REDUCTASE"/>
    <property type="match status" value="1"/>
</dbReference>
<dbReference type="PANTHER" id="PTHR34354:SF1">
    <property type="entry name" value="NADPH-DEPENDENT 7-CYANO-7-DEAZAGUANINE REDUCTASE"/>
    <property type="match status" value="1"/>
</dbReference>
<dbReference type="Pfam" id="PF14489">
    <property type="entry name" value="QueF"/>
    <property type="match status" value="1"/>
</dbReference>
<dbReference type="PIRSF" id="PIRSF027377">
    <property type="entry name" value="Nitrile_oxidored_QueF"/>
    <property type="match status" value="1"/>
</dbReference>
<dbReference type="SUPFAM" id="SSF55620">
    <property type="entry name" value="Tetrahydrobiopterin biosynthesis enzymes-like"/>
    <property type="match status" value="1"/>
</dbReference>
<proteinExistence type="inferred from homology"/>
<accession>Q9A515</accession>
<protein>
    <recommendedName>
        <fullName evidence="1">NADPH-dependent 7-cyano-7-deazaguanine reductase</fullName>
        <ecNumber evidence="1">1.7.1.13</ecNumber>
    </recommendedName>
    <alternativeName>
        <fullName evidence="1">7-cyano-7-carbaguanine reductase</fullName>
    </alternativeName>
    <alternativeName>
        <fullName evidence="1">NADPH-dependent nitrile oxidoreductase</fullName>
    </alternativeName>
    <alternativeName>
        <fullName evidence="1">PreQ(0) reductase</fullName>
    </alternativeName>
</protein>
<evidence type="ECO:0000255" key="1">
    <source>
        <dbReference type="HAMAP-Rule" id="MF_00818"/>
    </source>
</evidence>
<comment type="function">
    <text evidence="1">Catalyzes the NADPH-dependent reduction of 7-cyano-7-deazaguanine (preQ0) to 7-aminomethyl-7-deazaguanine (preQ1).</text>
</comment>
<comment type="catalytic activity">
    <reaction evidence="1">
        <text>7-aminomethyl-7-carbaguanine + 2 NADP(+) = 7-cyano-7-deazaguanine + 2 NADPH + 3 H(+)</text>
        <dbReference type="Rhea" id="RHEA:13409"/>
        <dbReference type="ChEBI" id="CHEBI:15378"/>
        <dbReference type="ChEBI" id="CHEBI:45075"/>
        <dbReference type="ChEBI" id="CHEBI:57783"/>
        <dbReference type="ChEBI" id="CHEBI:58349"/>
        <dbReference type="ChEBI" id="CHEBI:58703"/>
        <dbReference type="EC" id="1.7.1.13"/>
    </reaction>
</comment>
<comment type="pathway">
    <text evidence="1">tRNA modification; tRNA-queuosine biosynthesis.</text>
</comment>
<comment type="subcellular location">
    <subcellularLocation>
        <location evidence="1">Cytoplasm</location>
    </subcellularLocation>
</comment>
<comment type="similarity">
    <text evidence="1">Belongs to the GTP cyclohydrolase I family. QueF type 1 subfamily.</text>
</comment>